<protein>
    <recommendedName>
        <fullName evidence="4">Cyclohexadienyl dehydrogenase</fullName>
    </recommendedName>
    <alternativeName>
        <fullName evidence="4">Arogenate dehydrogenase</fullName>
        <shortName evidence="4">ADH</shortName>
        <ecNumber evidence="3">1.3.1.43</ecNumber>
    </alternativeName>
    <alternativeName>
        <fullName evidence="4">Prephenate dehydrogenase</fullName>
        <shortName evidence="4">PDH</shortName>
        <ecNumber evidence="3">1.3.1.12</ecNumber>
    </alternativeName>
</protein>
<gene>
    <name evidence="4" type="primary">tyrC</name>
    <name type="ordered locus">ZMO0420</name>
</gene>
<evidence type="ECO:0000255" key="1"/>
<evidence type="ECO:0000255" key="2">
    <source>
        <dbReference type="PROSITE-ProRule" id="PRU00522"/>
    </source>
</evidence>
<evidence type="ECO:0000269" key="3">
    <source>
    </source>
</evidence>
<evidence type="ECO:0000303" key="4">
    <source>
    </source>
</evidence>
<evidence type="ECO:0000305" key="5"/>
<feature type="chain" id="PRO_0000119209" description="Cyclohexadienyl dehydrogenase">
    <location>
        <begin position="1"/>
        <end position="293"/>
    </location>
</feature>
<feature type="domain" description="Prephenate/arogenate dehydrogenase" evidence="2">
    <location>
        <begin position="5"/>
        <end position="293"/>
    </location>
</feature>
<feature type="binding site" evidence="1">
    <location>
        <begin position="6"/>
        <end position="30"/>
    </location>
    <ligand>
        <name>NAD(+)</name>
        <dbReference type="ChEBI" id="CHEBI:57540"/>
    </ligand>
</feature>
<feature type="sequence conflict" description="In Ref. 1; AAA27684/CAA47647." evidence="5" ref="1">
    <original>R</original>
    <variation>C</variation>
    <location>
        <position position="42"/>
    </location>
</feature>
<feature type="sequence conflict" description="In Ref. 1; AAA27684/CAA47647." evidence="5" ref="1">
    <original>G</original>
    <variation>E</variation>
    <location>
        <position position="268"/>
    </location>
</feature>
<feature type="sequence conflict" description="In Ref. 1; AAA27684/CAA47647." evidence="5" ref="1">
    <original>R</original>
    <variation>H</variation>
    <location>
        <position position="292"/>
    </location>
</feature>
<dbReference type="EC" id="1.3.1.43" evidence="3"/>
<dbReference type="EC" id="1.3.1.12" evidence="3"/>
<dbReference type="EMBL" id="M75891">
    <property type="protein sequence ID" value="AAA27684.1"/>
    <property type="molecule type" value="Genomic_DNA"/>
</dbReference>
<dbReference type="EMBL" id="X67208">
    <property type="protein sequence ID" value="CAA47647.1"/>
    <property type="molecule type" value="Genomic_DNA"/>
</dbReference>
<dbReference type="EMBL" id="AE008692">
    <property type="protein sequence ID" value="AAV89044.1"/>
    <property type="molecule type" value="Genomic_DNA"/>
</dbReference>
<dbReference type="PIR" id="S29384">
    <property type="entry name" value="S29384"/>
</dbReference>
<dbReference type="RefSeq" id="WP_011240335.1">
    <property type="nucleotide sequence ID" value="NZ_CP035711.1"/>
</dbReference>
<dbReference type="SMR" id="Q04983"/>
<dbReference type="STRING" id="264203.ZMO0420"/>
<dbReference type="KEGG" id="zmo:ZMO0420"/>
<dbReference type="eggNOG" id="COG0287">
    <property type="taxonomic scope" value="Bacteria"/>
</dbReference>
<dbReference type="HOGENOM" id="CLU_055968_0_1_5"/>
<dbReference type="UniPathway" id="UPA00122">
    <property type="reaction ID" value="UER00959"/>
</dbReference>
<dbReference type="UniPathway" id="UPA00122">
    <property type="reaction ID" value="UER00961"/>
</dbReference>
<dbReference type="Proteomes" id="UP000001173">
    <property type="component" value="Chromosome"/>
</dbReference>
<dbReference type="GO" id="GO:0047794">
    <property type="term" value="F:cyclohexadienyl dehydrogenase activity"/>
    <property type="evidence" value="ECO:0000314"/>
    <property type="project" value="UniProtKB"/>
</dbReference>
<dbReference type="GO" id="GO:0070403">
    <property type="term" value="F:NAD+ binding"/>
    <property type="evidence" value="ECO:0000314"/>
    <property type="project" value="UniProtKB"/>
</dbReference>
<dbReference type="GO" id="GO:0008977">
    <property type="term" value="F:prephenate dehydrogenase (NAD+) activity"/>
    <property type="evidence" value="ECO:0000314"/>
    <property type="project" value="UniProtKB"/>
</dbReference>
<dbReference type="GO" id="GO:0004665">
    <property type="term" value="F:prephenate dehydrogenase (NADP+) activity"/>
    <property type="evidence" value="ECO:0007669"/>
    <property type="project" value="InterPro"/>
</dbReference>
<dbReference type="GO" id="GO:0042803">
    <property type="term" value="F:protein homodimerization activity"/>
    <property type="evidence" value="ECO:0000314"/>
    <property type="project" value="UniProtKB"/>
</dbReference>
<dbReference type="GO" id="GO:0006571">
    <property type="term" value="P:tyrosine biosynthetic process"/>
    <property type="evidence" value="ECO:0000316"/>
    <property type="project" value="UniProtKB"/>
</dbReference>
<dbReference type="FunFam" id="1.10.3660.10:FF:000003">
    <property type="entry name" value="Prephenate dehydrogenase"/>
    <property type="match status" value="1"/>
</dbReference>
<dbReference type="FunFam" id="3.40.50.720:FF:000208">
    <property type="entry name" value="Prephenate dehydrogenase"/>
    <property type="match status" value="1"/>
</dbReference>
<dbReference type="Gene3D" id="1.10.3660.10">
    <property type="entry name" value="6-phosphogluconate dehydrogenase C-terminal like domain"/>
    <property type="match status" value="1"/>
</dbReference>
<dbReference type="Gene3D" id="3.40.50.720">
    <property type="entry name" value="NAD(P)-binding Rossmann-like Domain"/>
    <property type="match status" value="1"/>
</dbReference>
<dbReference type="InterPro" id="IPR008927">
    <property type="entry name" value="6-PGluconate_DH-like_C_sf"/>
</dbReference>
<dbReference type="InterPro" id="IPR036291">
    <property type="entry name" value="NAD(P)-bd_dom_sf"/>
</dbReference>
<dbReference type="InterPro" id="IPR046825">
    <property type="entry name" value="PDH_C"/>
</dbReference>
<dbReference type="InterPro" id="IPR046826">
    <property type="entry name" value="PDH_N"/>
</dbReference>
<dbReference type="InterPro" id="IPR050812">
    <property type="entry name" value="Preph/Arog_dehydrog"/>
</dbReference>
<dbReference type="InterPro" id="IPR003099">
    <property type="entry name" value="Prephen_DH"/>
</dbReference>
<dbReference type="PANTHER" id="PTHR21363">
    <property type="entry name" value="PREPHENATE DEHYDROGENASE"/>
    <property type="match status" value="1"/>
</dbReference>
<dbReference type="PANTHER" id="PTHR21363:SF0">
    <property type="entry name" value="PREPHENATE DEHYDROGENASE [NADP(+)]"/>
    <property type="match status" value="1"/>
</dbReference>
<dbReference type="Pfam" id="PF20463">
    <property type="entry name" value="PDH_C"/>
    <property type="match status" value="1"/>
</dbReference>
<dbReference type="Pfam" id="PF02153">
    <property type="entry name" value="PDH_N"/>
    <property type="match status" value="1"/>
</dbReference>
<dbReference type="SUPFAM" id="SSF48179">
    <property type="entry name" value="6-phosphogluconate dehydrogenase C-terminal domain-like"/>
    <property type="match status" value="1"/>
</dbReference>
<dbReference type="SUPFAM" id="SSF51735">
    <property type="entry name" value="NAD(P)-binding Rossmann-fold domains"/>
    <property type="match status" value="1"/>
</dbReference>
<dbReference type="PROSITE" id="PS51176">
    <property type="entry name" value="PDH_ADH"/>
    <property type="match status" value="1"/>
</dbReference>
<reference key="1">
    <citation type="journal article" date="1993" name="Eur. J. Biochem.">
        <title>An allosterically insensitive class of cyclohexadienyl dehydrogenase from Zymomonas mobilis.</title>
        <authorList>
            <person name="Zhao G."/>
            <person name="Xia T."/>
            <person name="Ingram L.O."/>
            <person name="Jensen R.A."/>
        </authorList>
    </citation>
    <scope>NUCLEOTIDE SEQUENCE [GENOMIC DNA]</scope>
    <scope>PROTEIN SEQUENCE OF 1-11</scope>
    <scope>FUNCTION</scope>
    <scope>CATALYTIC ACTIVITY</scope>
    <scope>BIOPHYSICOCHEMICAL PROPERTIES</scope>
    <scope>ACTIVITY REGULATION</scope>
    <scope>PATHWAY</scope>
    <scope>SUBUNIT</scope>
    <source>
        <strain>ATCC 31821 / ZM4 / CP4</strain>
    </source>
</reference>
<reference key="2">
    <citation type="journal article" date="2005" name="Nat. Biotechnol.">
        <title>The genome sequence of the ethanologenic bacterium Zymomonas mobilis ZM4.</title>
        <authorList>
            <person name="Seo J.-S."/>
            <person name="Chong H."/>
            <person name="Park H.S."/>
            <person name="Yoon K.-O."/>
            <person name="Jung C."/>
            <person name="Kim J.J."/>
            <person name="Hong J.H."/>
            <person name="Kim H."/>
            <person name="Kim J.-H."/>
            <person name="Kil J.-I."/>
            <person name="Park C.J."/>
            <person name="Oh H.-M."/>
            <person name="Lee J.-S."/>
            <person name="Jin S.-J."/>
            <person name="Um H.-W."/>
            <person name="Lee H.-J."/>
            <person name="Oh S.-J."/>
            <person name="Kim J.Y."/>
            <person name="Kang H.L."/>
            <person name="Lee S.Y."/>
            <person name="Lee K.J."/>
            <person name="Kang H.S."/>
        </authorList>
    </citation>
    <scope>NUCLEOTIDE SEQUENCE [LARGE SCALE GENOMIC DNA]</scope>
    <source>
        <strain>ATCC 31821 / ZM4 / CP4</strain>
    </source>
</reference>
<comment type="function">
    <text evidence="3">Can function as either prephenate dehydrogenase or as arogenate dehydrogenase in the biosynthesis of L-tyrosine. Catalyzes two analogous reactions: converts prephenate to 4-hydroxyphenylpyruvate and transforms L-arogenate to L-tyrosine. Is not able to utilize NADP(+) instead of NAD(+) as cosubstrate.</text>
</comment>
<comment type="catalytic activity">
    <reaction evidence="3">
        <text>L-arogenate + NAD(+) = L-tyrosine + CO2 + NADH</text>
        <dbReference type="Rhea" id="RHEA:12256"/>
        <dbReference type="ChEBI" id="CHEBI:16526"/>
        <dbReference type="ChEBI" id="CHEBI:57540"/>
        <dbReference type="ChEBI" id="CHEBI:57945"/>
        <dbReference type="ChEBI" id="CHEBI:58180"/>
        <dbReference type="ChEBI" id="CHEBI:58315"/>
        <dbReference type="EC" id="1.3.1.43"/>
    </reaction>
</comment>
<comment type="catalytic activity">
    <reaction evidence="3">
        <text>prephenate + NAD(+) = 3-(4-hydroxyphenyl)pyruvate + CO2 + NADH</text>
        <dbReference type="Rhea" id="RHEA:13869"/>
        <dbReference type="ChEBI" id="CHEBI:16526"/>
        <dbReference type="ChEBI" id="CHEBI:29934"/>
        <dbReference type="ChEBI" id="CHEBI:36242"/>
        <dbReference type="ChEBI" id="CHEBI:57540"/>
        <dbReference type="ChEBI" id="CHEBI:57945"/>
        <dbReference type="EC" id="1.3.1.12"/>
    </reaction>
</comment>
<comment type="activity regulation">
    <text evidence="3">Insensitive to feedback inhibition by L-tyrosine.</text>
</comment>
<comment type="biophysicochemical properties">
    <kinetics>
        <KM evidence="3">0.25 mM for L-arogenate (at pH 6.6 and 37 degrees Celsius)</KM>
        <KM evidence="3">0.18 mM for prephenate (at pH 6.6 and 37 degrees Celsius)</KM>
        <KM evidence="3">0.09 mM for NAD(+) (at pH 6.6 and 37 degrees Celsius)</KM>
        <text evidence="3">The KM value obtained for NAD(+) is the same regardless of whether the enzyme is assayed as arogenate dehydrogenase or as prephenate dehydrogenase. Has a greater Vmax with L-arogenate as substrate (about 3-fold higher than with prephenate).</text>
    </kinetics>
    <phDependence>
        <text evidence="3">Optimum pH is 6.6 for both activities.</text>
    </phDependence>
</comment>
<comment type="pathway">
    <text evidence="3">Amino-acid biosynthesis; L-tyrosine biosynthesis; (4-hydroxyphenyl)pyruvate from prephenate (NAD(+) route): step 1/1.</text>
</comment>
<comment type="pathway">
    <text evidence="3">Amino-acid biosynthesis; L-tyrosine biosynthesis; L-tyrosine from L-arogenate (NAD(+) route): step 1/1.</text>
</comment>
<comment type="subunit">
    <text evidence="3">Homodimer.</text>
</comment>
<comment type="similarity">
    <text evidence="5">Belongs to the prephenate/arogenate dehydrogenase family.</text>
</comment>
<proteinExistence type="evidence at protein level"/>
<organism>
    <name type="scientific">Zymomonas mobilis subsp. mobilis (strain ATCC 31821 / ZM4 / CP4)</name>
    <dbReference type="NCBI Taxonomy" id="264203"/>
    <lineage>
        <taxon>Bacteria</taxon>
        <taxon>Pseudomonadati</taxon>
        <taxon>Pseudomonadota</taxon>
        <taxon>Alphaproteobacteria</taxon>
        <taxon>Sphingomonadales</taxon>
        <taxon>Zymomonadaceae</taxon>
        <taxon>Zymomonas</taxon>
    </lineage>
</organism>
<keyword id="KW-0028">Amino-acid biosynthesis</keyword>
<keyword id="KW-0057">Aromatic amino acid biosynthesis</keyword>
<keyword id="KW-0903">Direct protein sequencing</keyword>
<keyword id="KW-0520">NAD</keyword>
<keyword id="KW-0560">Oxidoreductase</keyword>
<keyword id="KW-1185">Reference proteome</keyword>
<keyword id="KW-0827">Tyrosine biosynthesis</keyword>
<sequence length="293" mass="32051">MTVFKHIAIIGLGLIGSSAARATKAYCPDVTVSLYDKSEFVRDRARALNLGDNVTDDIQDAVREADLVLLCVPVRAMGIVAAAMAPALKKDVIICDTGSVKVSVIKTLQDNLPNHIIVPSHPLAGTENNGPDAGFAELFQDHPVILTPDAHTPAQAIAYIADYWEEIGGRINLMSAEHHDHVLALTSHLPHVIAYQLIGMVSGYEKKSRTPIMRYSAGSFRDATRVAASEPRLWQDIMLENAPALLPVLDHFIADLKKLRTAIASQDGDYLLEHFKESQKARLALKTDHDIRP</sequence>
<name>TYRC_ZYMMO</name>
<accession>Q04983</accession>
<accession>Q5NQG0</accession>